<dbReference type="EC" id="6.1.1.3" evidence="1"/>
<dbReference type="EMBL" id="CP000672">
    <property type="protein sequence ID" value="ABQ99206.1"/>
    <property type="molecule type" value="Genomic_DNA"/>
</dbReference>
<dbReference type="SMR" id="A5UEK1"/>
<dbReference type="KEGG" id="hiq:CGSHiGG_00495"/>
<dbReference type="HOGENOM" id="CLU_008554_0_1_6"/>
<dbReference type="Proteomes" id="UP000001990">
    <property type="component" value="Chromosome"/>
</dbReference>
<dbReference type="GO" id="GO:0005829">
    <property type="term" value="C:cytosol"/>
    <property type="evidence" value="ECO:0007669"/>
    <property type="project" value="TreeGrafter"/>
</dbReference>
<dbReference type="GO" id="GO:0005524">
    <property type="term" value="F:ATP binding"/>
    <property type="evidence" value="ECO:0007669"/>
    <property type="project" value="UniProtKB-UniRule"/>
</dbReference>
<dbReference type="GO" id="GO:0046872">
    <property type="term" value="F:metal ion binding"/>
    <property type="evidence" value="ECO:0007669"/>
    <property type="project" value="UniProtKB-KW"/>
</dbReference>
<dbReference type="GO" id="GO:0004829">
    <property type="term" value="F:threonine-tRNA ligase activity"/>
    <property type="evidence" value="ECO:0007669"/>
    <property type="project" value="UniProtKB-UniRule"/>
</dbReference>
<dbReference type="GO" id="GO:0000049">
    <property type="term" value="F:tRNA binding"/>
    <property type="evidence" value="ECO:0007669"/>
    <property type="project" value="UniProtKB-KW"/>
</dbReference>
<dbReference type="GO" id="GO:0006435">
    <property type="term" value="P:threonyl-tRNA aminoacylation"/>
    <property type="evidence" value="ECO:0007669"/>
    <property type="project" value="UniProtKB-UniRule"/>
</dbReference>
<dbReference type="CDD" id="cd01667">
    <property type="entry name" value="TGS_ThrRS"/>
    <property type="match status" value="1"/>
</dbReference>
<dbReference type="CDD" id="cd00860">
    <property type="entry name" value="ThrRS_anticodon"/>
    <property type="match status" value="1"/>
</dbReference>
<dbReference type="CDD" id="cd00771">
    <property type="entry name" value="ThrRS_core"/>
    <property type="match status" value="1"/>
</dbReference>
<dbReference type="FunFam" id="3.10.20.30:FF:000005">
    <property type="entry name" value="Threonine--tRNA ligase"/>
    <property type="match status" value="1"/>
</dbReference>
<dbReference type="FunFam" id="3.30.54.20:FF:000002">
    <property type="entry name" value="Threonine--tRNA ligase"/>
    <property type="match status" value="1"/>
</dbReference>
<dbReference type="FunFam" id="3.30.930.10:FF:000002">
    <property type="entry name" value="Threonine--tRNA ligase"/>
    <property type="match status" value="1"/>
</dbReference>
<dbReference type="FunFam" id="3.40.50.800:FF:000001">
    <property type="entry name" value="Threonine--tRNA ligase"/>
    <property type="match status" value="1"/>
</dbReference>
<dbReference type="FunFam" id="3.30.980.10:FF:000005">
    <property type="entry name" value="Threonyl-tRNA synthetase, mitochondrial"/>
    <property type="match status" value="1"/>
</dbReference>
<dbReference type="Gene3D" id="3.10.20.30">
    <property type="match status" value="1"/>
</dbReference>
<dbReference type="Gene3D" id="3.30.54.20">
    <property type="match status" value="1"/>
</dbReference>
<dbReference type="Gene3D" id="3.40.50.800">
    <property type="entry name" value="Anticodon-binding domain"/>
    <property type="match status" value="1"/>
</dbReference>
<dbReference type="Gene3D" id="3.30.930.10">
    <property type="entry name" value="Bira Bifunctional Protein, Domain 2"/>
    <property type="match status" value="1"/>
</dbReference>
<dbReference type="Gene3D" id="3.30.980.10">
    <property type="entry name" value="Threonyl-trna Synthetase, Chain A, domain 2"/>
    <property type="match status" value="1"/>
</dbReference>
<dbReference type="HAMAP" id="MF_00184">
    <property type="entry name" value="Thr_tRNA_synth"/>
    <property type="match status" value="1"/>
</dbReference>
<dbReference type="InterPro" id="IPR002314">
    <property type="entry name" value="aa-tRNA-synt_IIb"/>
</dbReference>
<dbReference type="InterPro" id="IPR006195">
    <property type="entry name" value="aa-tRNA-synth_II"/>
</dbReference>
<dbReference type="InterPro" id="IPR045864">
    <property type="entry name" value="aa-tRNA-synth_II/BPL/LPL"/>
</dbReference>
<dbReference type="InterPro" id="IPR004154">
    <property type="entry name" value="Anticodon-bd"/>
</dbReference>
<dbReference type="InterPro" id="IPR036621">
    <property type="entry name" value="Anticodon-bd_dom_sf"/>
</dbReference>
<dbReference type="InterPro" id="IPR012675">
    <property type="entry name" value="Beta-grasp_dom_sf"/>
</dbReference>
<dbReference type="InterPro" id="IPR004095">
    <property type="entry name" value="TGS"/>
</dbReference>
<dbReference type="InterPro" id="IPR012676">
    <property type="entry name" value="TGS-like"/>
</dbReference>
<dbReference type="InterPro" id="IPR002320">
    <property type="entry name" value="Thr-tRNA-ligase_IIa"/>
</dbReference>
<dbReference type="InterPro" id="IPR018163">
    <property type="entry name" value="Thr/Ala-tRNA-synth_IIc_edit"/>
</dbReference>
<dbReference type="InterPro" id="IPR047246">
    <property type="entry name" value="ThrRS_anticodon"/>
</dbReference>
<dbReference type="InterPro" id="IPR033728">
    <property type="entry name" value="ThrRS_core"/>
</dbReference>
<dbReference type="InterPro" id="IPR012947">
    <property type="entry name" value="tRNA_SAD"/>
</dbReference>
<dbReference type="NCBIfam" id="TIGR00418">
    <property type="entry name" value="thrS"/>
    <property type="match status" value="1"/>
</dbReference>
<dbReference type="PANTHER" id="PTHR11451:SF44">
    <property type="entry name" value="THREONINE--TRNA LIGASE, CHLOROPLASTIC_MITOCHONDRIAL 2"/>
    <property type="match status" value="1"/>
</dbReference>
<dbReference type="PANTHER" id="PTHR11451">
    <property type="entry name" value="THREONINE-TRNA LIGASE"/>
    <property type="match status" value="1"/>
</dbReference>
<dbReference type="Pfam" id="PF03129">
    <property type="entry name" value="HGTP_anticodon"/>
    <property type="match status" value="1"/>
</dbReference>
<dbReference type="Pfam" id="PF02824">
    <property type="entry name" value="TGS"/>
    <property type="match status" value="1"/>
</dbReference>
<dbReference type="Pfam" id="PF00587">
    <property type="entry name" value="tRNA-synt_2b"/>
    <property type="match status" value="1"/>
</dbReference>
<dbReference type="Pfam" id="PF07973">
    <property type="entry name" value="tRNA_SAD"/>
    <property type="match status" value="1"/>
</dbReference>
<dbReference type="PRINTS" id="PR01047">
    <property type="entry name" value="TRNASYNTHTHR"/>
</dbReference>
<dbReference type="SMART" id="SM00863">
    <property type="entry name" value="tRNA_SAD"/>
    <property type="match status" value="1"/>
</dbReference>
<dbReference type="SUPFAM" id="SSF52954">
    <property type="entry name" value="Class II aaRS ABD-related"/>
    <property type="match status" value="1"/>
</dbReference>
<dbReference type="SUPFAM" id="SSF55681">
    <property type="entry name" value="Class II aaRS and biotin synthetases"/>
    <property type="match status" value="1"/>
</dbReference>
<dbReference type="SUPFAM" id="SSF81271">
    <property type="entry name" value="TGS-like"/>
    <property type="match status" value="1"/>
</dbReference>
<dbReference type="SUPFAM" id="SSF55186">
    <property type="entry name" value="ThrRS/AlaRS common domain"/>
    <property type="match status" value="1"/>
</dbReference>
<dbReference type="PROSITE" id="PS50862">
    <property type="entry name" value="AA_TRNA_LIGASE_II"/>
    <property type="match status" value="1"/>
</dbReference>
<dbReference type="PROSITE" id="PS51880">
    <property type="entry name" value="TGS"/>
    <property type="match status" value="1"/>
</dbReference>
<organism>
    <name type="scientific">Haemophilus influenzae (strain PittGG)</name>
    <dbReference type="NCBI Taxonomy" id="374931"/>
    <lineage>
        <taxon>Bacteria</taxon>
        <taxon>Pseudomonadati</taxon>
        <taxon>Pseudomonadota</taxon>
        <taxon>Gammaproteobacteria</taxon>
        <taxon>Pasteurellales</taxon>
        <taxon>Pasteurellaceae</taxon>
        <taxon>Haemophilus</taxon>
    </lineage>
</organism>
<sequence length="643" mass="73647">MPIITLPDGSQRQFDNPVSVLEVAQDIGAGLAKATIAGRVNGERHDACDIIEQDATLEIITAKDEDGLEIIRHSCAHLLGHAIKQLFPDVKMAIGPTIENGFYYDVDLDRSLTQEDIDAIEKRMLELAKTNYDVVKKRVTWQEARDTFEKRGEPYKMAILDENIERTAMPALYHHLEYIDMCRGPHVPNMRFCQHFKLQKVAGAYWRGDSKNKMLQRIYGTAWADKKQLAEYLTRLEEAAKRDHRKIGKALDLYHMQEEAPGMVFWHNDGWTIFRELETFVRTKLKQYDYQEVKGPFMMDRVLWEKTGHWQNYADLMFTTQSENREYAIKPMNCPGHVQIFNQGLKSYRDLPIRMAEFGSCHRNEPSGSLHGLMRVRGFTQDDAHIFCTEDQIESEVTSCIKMVYDIYSTFGFTNIAVKLSTRPENRIGSDEMWDRAEAGLAAALAHNGLEYEIQEGEGAFYGPKIEFALRDCLGREWQCGTVQLDFALPGRLDATYVAEDNSRKTPVMIHRAILGSIERFIGIITEEYAGFFPAWLAPTQAVVMNITDSQADYVQKVAKQLSDVGLRVKTDLRNEKVGFKIREHTLRRVPYMLVCGDKEIAEGKVAVRTRKGADLGTFTVEEFAEILKNQVRSRELKLLNEE</sequence>
<feature type="chain" id="PRO_1000020399" description="Threonine--tRNA ligase">
    <location>
        <begin position="1"/>
        <end position="643"/>
    </location>
</feature>
<feature type="domain" description="TGS" evidence="2">
    <location>
        <begin position="1"/>
        <end position="61"/>
    </location>
</feature>
<feature type="region of interest" description="Catalytic" evidence="1">
    <location>
        <begin position="243"/>
        <end position="534"/>
    </location>
</feature>
<feature type="binding site" evidence="1">
    <location>
        <position position="334"/>
    </location>
    <ligand>
        <name>Zn(2+)</name>
        <dbReference type="ChEBI" id="CHEBI:29105"/>
    </ligand>
</feature>
<feature type="binding site" evidence="1">
    <location>
        <position position="385"/>
    </location>
    <ligand>
        <name>Zn(2+)</name>
        <dbReference type="ChEBI" id="CHEBI:29105"/>
    </ligand>
</feature>
<feature type="binding site" evidence="1">
    <location>
        <position position="511"/>
    </location>
    <ligand>
        <name>Zn(2+)</name>
        <dbReference type="ChEBI" id="CHEBI:29105"/>
    </ligand>
</feature>
<name>SYT_HAEIG</name>
<reference key="1">
    <citation type="journal article" date="2007" name="Genome Biol.">
        <title>Characterization and modeling of the Haemophilus influenzae core and supragenomes based on the complete genomic sequences of Rd and 12 clinical nontypeable strains.</title>
        <authorList>
            <person name="Hogg J.S."/>
            <person name="Hu F.Z."/>
            <person name="Janto B."/>
            <person name="Boissy R."/>
            <person name="Hayes J."/>
            <person name="Keefe R."/>
            <person name="Post J.C."/>
            <person name="Ehrlich G.D."/>
        </authorList>
    </citation>
    <scope>NUCLEOTIDE SEQUENCE [LARGE SCALE GENOMIC DNA]</scope>
    <source>
        <strain>PittGG</strain>
    </source>
</reference>
<keyword id="KW-0030">Aminoacyl-tRNA synthetase</keyword>
<keyword id="KW-0067">ATP-binding</keyword>
<keyword id="KW-0963">Cytoplasm</keyword>
<keyword id="KW-0436">Ligase</keyword>
<keyword id="KW-0479">Metal-binding</keyword>
<keyword id="KW-0547">Nucleotide-binding</keyword>
<keyword id="KW-0648">Protein biosynthesis</keyword>
<keyword id="KW-0694">RNA-binding</keyword>
<keyword id="KW-0820">tRNA-binding</keyword>
<keyword id="KW-0862">Zinc</keyword>
<comment type="function">
    <text evidence="1">Catalyzes the attachment of threonine to tRNA(Thr) in a two-step reaction: L-threonine is first activated by ATP to form Thr-AMP and then transferred to the acceptor end of tRNA(Thr). Also edits incorrectly charged L-seryl-tRNA(Thr).</text>
</comment>
<comment type="catalytic activity">
    <reaction evidence="1">
        <text>tRNA(Thr) + L-threonine + ATP = L-threonyl-tRNA(Thr) + AMP + diphosphate + H(+)</text>
        <dbReference type="Rhea" id="RHEA:24624"/>
        <dbReference type="Rhea" id="RHEA-COMP:9670"/>
        <dbReference type="Rhea" id="RHEA-COMP:9704"/>
        <dbReference type="ChEBI" id="CHEBI:15378"/>
        <dbReference type="ChEBI" id="CHEBI:30616"/>
        <dbReference type="ChEBI" id="CHEBI:33019"/>
        <dbReference type="ChEBI" id="CHEBI:57926"/>
        <dbReference type="ChEBI" id="CHEBI:78442"/>
        <dbReference type="ChEBI" id="CHEBI:78534"/>
        <dbReference type="ChEBI" id="CHEBI:456215"/>
        <dbReference type="EC" id="6.1.1.3"/>
    </reaction>
</comment>
<comment type="cofactor">
    <cofactor evidence="1">
        <name>Zn(2+)</name>
        <dbReference type="ChEBI" id="CHEBI:29105"/>
    </cofactor>
    <text evidence="1">Binds 1 zinc ion per subunit.</text>
</comment>
<comment type="subunit">
    <text evidence="1">Homodimer.</text>
</comment>
<comment type="subcellular location">
    <subcellularLocation>
        <location evidence="1">Cytoplasm</location>
    </subcellularLocation>
</comment>
<comment type="similarity">
    <text evidence="1">Belongs to the class-II aminoacyl-tRNA synthetase family.</text>
</comment>
<proteinExistence type="inferred from homology"/>
<protein>
    <recommendedName>
        <fullName evidence="1">Threonine--tRNA ligase</fullName>
        <ecNumber evidence="1">6.1.1.3</ecNumber>
    </recommendedName>
    <alternativeName>
        <fullName evidence="1">Threonyl-tRNA synthetase</fullName>
        <shortName evidence="1">ThrRS</shortName>
    </alternativeName>
</protein>
<accession>A5UEK1</accession>
<gene>
    <name evidence="1" type="primary">thrS</name>
    <name type="ordered locus">CGSHiGG_00495</name>
</gene>
<evidence type="ECO:0000255" key="1">
    <source>
        <dbReference type="HAMAP-Rule" id="MF_00184"/>
    </source>
</evidence>
<evidence type="ECO:0000255" key="2">
    <source>
        <dbReference type="PROSITE-ProRule" id="PRU01228"/>
    </source>
</evidence>